<accession>Q32BH8</accession>
<sequence>MTPWFLYLIRTADNKLYTGITTDVERRYQQHQSGKGAKALRGKGELTLAFSAPVGDRSLALRAEYRVKQLTKRQKERLVAEGTGFAELLSSLQTPKIKSD</sequence>
<reference key="1">
    <citation type="journal article" date="2005" name="Nucleic Acids Res.">
        <title>Genome dynamics and diversity of Shigella species, the etiologic agents of bacillary dysentery.</title>
        <authorList>
            <person name="Yang F."/>
            <person name="Yang J."/>
            <person name="Zhang X."/>
            <person name="Chen L."/>
            <person name="Jiang Y."/>
            <person name="Yan Y."/>
            <person name="Tang X."/>
            <person name="Wang J."/>
            <person name="Xiong Z."/>
            <person name="Dong J."/>
            <person name="Xue Y."/>
            <person name="Zhu Y."/>
            <person name="Xu X."/>
            <person name="Sun L."/>
            <person name="Chen S."/>
            <person name="Nie H."/>
            <person name="Peng J."/>
            <person name="Xu J."/>
            <person name="Wang Y."/>
            <person name="Yuan Z."/>
            <person name="Wen Y."/>
            <person name="Yao Z."/>
            <person name="Shen Y."/>
            <person name="Qiang B."/>
            <person name="Hou Y."/>
            <person name="Yu J."/>
            <person name="Jin Q."/>
        </authorList>
    </citation>
    <scope>NUCLEOTIDE SEQUENCE [LARGE SCALE GENOMIC DNA]</scope>
    <source>
        <strain>Sd197</strain>
    </source>
</reference>
<proteinExistence type="inferred from homology"/>
<organism>
    <name type="scientific">Shigella dysenteriae serotype 1 (strain Sd197)</name>
    <dbReference type="NCBI Taxonomy" id="300267"/>
    <lineage>
        <taxon>Bacteria</taxon>
        <taxon>Pseudomonadati</taxon>
        <taxon>Pseudomonadota</taxon>
        <taxon>Gammaproteobacteria</taxon>
        <taxon>Enterobacterales</taxon>
        <taxon>Enterobacteriaceae</taxon>
        <taxon>Shigella</taxon>
    </lineage>
</organism>
<feature type="chain" id="PRO_1000063683" description="UPF0213 protein YhbQ">
    <location>
        <begin position="1"/>
        <end position="100"/>
    </location>
</feature>
<feature type="domain" description="GIY-YIG" evidence="1">
    <location>
        <begin position="2"/>
        <end position="77"/>
    </location>
</feature>
<gene>
    <name evidence="1" type="primary">yhbQ</name>
    <name type="ordered locus">SDY_3334</name>
</gene>
<name>YHBQ_SHIDS</name>
<dbReference type="EMBL" id="CP000034">
    <property type="protein sequence ID" value="ABB63327.1"/>
    <property type="molecule type" value="Genomic_DNA"/>
</dbReference>
<dbReference type="RefSeq" id="WP_000189325.1">
    <property type="nucleotide sequence ID" value="NC_007606.1"/>
</dbReference>
<dbReference type="RefSeq" id="YP_404818.1">
    <property type="nucleotide sequence ID" value="NC_007606.1"/>
</dbReference>
<dbReference type="SMR" id="Q32BH8"/>
<dbReference type="STRING" id="300267.SDY_3334"/>
<dbReference type="EnsemblBacteria" id="ABB63327">
    <property type="protein sequence ID" value="ABB63327"/>
    <property type="gene ID" value="SDY_3334"/>
</dbReference>
<dbReference type="KEGG" id="sdy:SDY_3334"/>
<dbReference type="PATRIC" id="fig|300267.13.peg.3988"/>
<dbReference type="HOGENOM" id="CLU_135650_0_1_6"/>
<dbReference type="Proteomes" id="UP000002716">
    <property type="component" value="Chromosome"/>
</dbReference>
<dbReference type="CDD" id="cd10456">
    <property type="entry name" value="GIY-YIG_UPF0213"/>
    <property type="match status" value="1"/>
</dbReference>
<dbReference type="FunFam" id="3.40.1440.10:FF:000002">
    <property type="entry name" value="UPF0213 protein YhbQ"/>
    <property type="match status" value="1"/>
</dbReference>
<dbReference type="Gene3D" id="3.40.1440.10">
    <property type="entry name" value="GIY-YIG endonuclease"/>
    <property type="match status" value="1"/>
</dbReference>
<dbReference type="HAMAP" id="MF_01029">
    <property type="entry name" value="UPF0213"/>
    <property type="match status" value="1"/>
</dbReference>
<dbReference type="InterPro" id="IPR000305">
    <property type="entry name" value="GIY-YIG_endonuc"/>
</dbReference>
<dbReference type="InterPro" id="IPR035901">
    <property type="entry name" value="GIY-YIG_endonuc_sf"/>
</dbReference>
<dbReference type="InterPro" id="IPR050190">
    <property type="entry name" value="UPF0213_domain"/>
</dbReference>
<dbReference type="InterPro" id="IPR022992">
    <property type="entry name" value="UPF0213_GIY-YIG_endonuc"/>
</dbReference>
<dbReference type="PANTHER" id="PTHR34477">
    <property type="entry name" value="UPF0213 PROTEIN YHBQ"/>
    <property type="match status" value="1"/>
</dbReference>
<dbReference type="PANTHER" id="PTHR34477:SF1">
    <property type="entry name" value="UPF0213 PROTEIN YHBQ"/>
    <property type="match status" value="1"/>
</dbReference>
<dbReference type="Pfam" id="PF01541">
    <property type="entry name" value="GIY-YIG"/>
    <property type="match status" value="1"/>
</dbReference>
<dbReference type="SMART" id="SM00465">
    <property type="entry name" value="GIYc"/>
    <property type="match status" value="1"/>
</dbReference>
<dbReference type="SUPFAM" id="SSF82771">
    <property type="entry name" value="GIY-YIG endonuclease"/>
    <property type="match status" value="1"/>
</dbReference>
<dbReference type="PROSITE" id="PS50164">
    <property type="entry name" value="GIY_YIG"/>
    <property type="match status" value="1"/>
</dbReference>
<protein>
    <recommendedName>
        <fullName evidence="1">UPF0213 protein YhbQ</fullName>
    </recommendedName>
</protein>
<comment type="similarity">
    <text evidence="1">Belongs to the UPF0213 family.</text>
</comment>
<keyword id="KW-1185">Reference proteome</keyword>
<evidence type="ECO:0000255" key="1">
    <source>
        <dbReference type="HAMAP-Rule" id="MF_01029"/>
    </source>
</evidence>